<comment type="function">
    <text evidence="1 7">Sequence-specific DNA-binding transcription factor that binds palindromic sequences within promoters and may activate or repress the transcription of a subset of genes (PubMed:12929931). Most probably regulates the expression of genes involved in the development of mesenchyme-derived craniofacial structures (By similarity). Early on in development, it plays a role in forebrain mesenchyme survival (By similarity). May also induce epithelial to mesenchymal transition (EMT) through the expression of SNAI1 (By similarity).</text>
</comment>
<comment type="subunit">
    <text evidence="5 7">Binds DNA as a homodimer; required for transcriptional activation (PubMed:12390248). Interacts (via homeobox domain) with EP300; acetylates ALX1 and stimulates its transcriptional activity (PubMed:12929931).</text>
</comment>
<comment type="subcellular location">
    <subcellularLocation>
        <location evidence="5 7">Nucleus</location>
    </subcellularLocation>
</comment>
<comment type="alternative products">
    <event type="alternative splicing"/>
    <isoform>
        <id>Q63087-1</id>
        <name>1</name>
        <name evidence="9">alpha</name>
        <sequence type="displayed"/>
    </isoform>
    <isoform>
        <id>Q63087-2</id>
        <name>2</name>
        <name evidence="9">beta</name>
        <sequence type="described" ref="VSP_057658 VSP_057659"/>
    </isoform>
    <isoform>
        <id>Q63087-3</id>
        <name>3</name>
        <name evidence="9">gamma</name>
        <sequence type="described" ref="VSP_057657"/>
    </isoform>
</comment>
<comment type="tissue specificity">
    <text evidence="8">Expressed in chondrocytes.</text>
</comment>
<comment type="developmental stage">
    <text evidence="8">Expressed in condensed prechondrocytic mesenchymal cells and in early chondrocytes of cartilage primordia. Expression is lower in mature chondrocytes.</text>
</comment>
<comment type="domain">
    <text evidence="5 6">The OAR motif may negatively regulate DNA-binding and therefore transcriptional activity. It is found in the C-terminal transactivation domain that stimulates transcription.</text>
</comment>
<comment type="PTM">
    <text evidence="7">Acetylated at Lys-131 by EP300; increases interaction with EP300 and stimulates ALX1 transcriptional activity.</text>
</comment>
<comment type="miscellaneous">
    <molecule>Isoform 2</molecule>
    <text evidence="5">Unable to bind DNA and activate transcription. Acts as a dominant negative through dimerization with isoform 1.</text>
</comment>
<comment type="miscellaneous">
    <molecule>Isoform 3</molecule>
    <text evidence="5">Unable to bind DNA and activate transcription. Acts as a dominant negative through dimerization with isoform 1.</text>
</comment>
<comment type="similarity">
    <text evidence="11">Belongs to the paired homeobox family.</text>
</comment>
<protein>
    <recommendedName>
        <fullName evidence="11">ALX homeobox protein 1</fullName>
    </recommendedName>
    <alternativeName>
        <fullName evidence="10">Cartilage homeoprotein 1</fullName>
        <shortName evidence="10">CART-1</shortName>
    </alternativeName>
</protein>
<keyword id="KW-0007">Acetylation</keyword>
<keyword id="KW-0010">Activator</keyword>
<keyword id="KW-0025">Alternative splicing</keyword>
<keyword id="KW-0217">Developmental protein</keyword>
<keyword id="KW-0238">DNA-binding</keyword>
<keyword id="KW-0371">Homeobox</keyword>
<keyword id="KW-0539">Nucleus</keyword>
<keyword id="KW-0597">Phosphoprotein</keyword>
<keyword id="KW-1185">Reference proteome</keyword>
<keyword id="KW-0678">Repressor</keyword>
<keyword id="KW-0804">Transcription</keyword>
<keyword id="KW-0805">Transcription regulation</keyword>
<name>ALX1_RAT</name>
<feature type="chain" id="PRO_0000048857" description="ALX homeobox protein 1">
    <location>
        <begin position="1"/>
        <end position="326"/>
    </location>
</feature>
<feature type="DNA-binding region" description="Homeobox" evidence="3">
    <location>
        <begin position="132"/>
        <end position="191"/>
    </location>
</feature>
<feature type="region of interest" description="Transactivation domain" evidence="5">
    <location>
        <begin position="192"/>
        <end position="326"/>
    </location>
</feature>
<feature type="short sequence motif" description="OAR" evidence="4">
    <location>
        <begin position="306"/>
        <end position="319"/>
    </location>
</feature>
<feature type="modified residue" description="Phosphoserine" evidence="1">
    <location>
        <position position="12"/>
    </location>
</feature>
<feature type="modified residue" description="Phosphoserine" evidence="1">
    <location>
        <position position="69"/>
    </location>
</feature>
<feature type="modified residue" description="N6-acetyllysine; by EP300" evidence="2">
    <location>
        <position position="131"/>
    </location>
</feature>
<feature type="modified residue" description="Phosphoserine" evidence="1">
    <location>
        <position position="306"/>
    </location>
</feature>
<feature type="splice variant" id="VSP_057657" description="In isoform 3." evidence="9">
    <location>
        <begin position="177"/>
        <end position="219"/>
    </location>
</feature>
<feature type="splice variant" id="VSP_057658" description="In isoform 2." evidence="9">
    <original>VWFQNRRAKWRKRER</original>
    <variation>GQVEKKRTLRPNTAS</variation>
    <location>
        <begin position="178"/>
        <end position="192"/>
    </location>
</feature>
<feature type="splice variant" id="VSP_057659" description="In isoform 2." evidence="9">
    <location>
        <begin position="193"/>
        <end position="326"/>
    </location>
</feature>
<feature type="mutagenesis site" description="Loss of EP300-mediated transcriptional coactivation." evidence="7">
    <original>K</original>
    <variation>R</variation>
    <location>
        <position position="131"/>
    </location>
</feature>
<feature type="mutagenesis site" description="Loss of transcriptional activity. Loss of DNA-binding. Altered localization to the nucleus." evidence="5">
    <original>RRHR</original>
    <variation>GGHG</variation>
    <location>
        <begin position="133"/>
        <end position="136"/>
    </location>
</feature>
<feature type="mutagenesis site" description="Loss of transcriptional activity. No effect on DNA-binding. Loss of homodimerization. Altered localization to the nucleus." evidence="5">
    <original>RKR</original>
    <variation>GKG</variation>
    <location>
        <begin position="188"/>
        <end position="190"/>
    </location>
</feature>
<proteinExistence type="evidence at protein level"/>
<reference key="1">
    <citation type="journal article" date="1993" name="Proc. Natl. Acad. Sci. U.S.A.">
        <title>Cartilage homeoprotein 1, a homeoprotein selectively expressed in chondrocytes.</title>
        <authorList>
            <person name="Zhao G.-Q."/>
            <person name="Zhou X."/>
            <person name="Eberspaecher H."/>
            <person name="Solursh M."/>
            <person name="de Crombrugghe B."/>
        </authorList>
    </citation>
    <scope>NUCLEOTIDE SEQUENCE [MRNA] (ISOFORM 1)</scope>
    <scope>TISSUE SPECIFICITY</scope>
    <scope>DEVELOPMENTAL STAGE</scope>
    <source>
        <tissue>Chondrosarcoma</tissue>
    </source>
</reference>
<reference key="2">
    <citation type="journal article" date="2002" name="Genes Cells">
        <title>Functional domains of paired-like homeoprotein Cart1 and the relationship between dimerization and transcription activity.</title>
        <authorList>
            <person name="Furukawa K."/>
            <person name="Iioka T."/>
            <person name="Morishita M."/>
            <person name="Yamaguchi A."/>
            <person name="Shindo H."/>
            <person name="Namba H."/>
            <person name="Yamashita S."/>
            <person name="Tsukazaki T."/>
        </authorList>
    </citation>
    <scope>ALTERNATIVE SPLICING (ISOFORMS 2 AND 3)</scope>
    <scope>SUBUNIT</scope>
    <scope>SUBCELLULAR LOCATION</scope>
    <scope>REGION</scope>
</reference>
<reference key="3">
    <citation type="journal article" date="2003" name="J. Bone Miner. Res.">
        <title>P300/CBP acts as a coactivator to cartilage homeoprotein-1 (Cart1), paired-like homeoprotein, through acetylation of the conserved lysine residue adjacent to the homeodomain.</title>
        <authorList>
            <person name="Iioka T."/>
            <person name="Furukawa K."/>
            <person name="Yamaguchi A."/>
            <person name="Shindo H."/>
            <person name="Yamashita S."/>
            <person name="Tsukazaki T."/>
        </authorList>
    </citation>
    <scope>FUNCTION</scope>
    <scope>INTERACTION WITH EP300</scope>
    <scope>SUBCELLULAR LOCATION</scope>
    <scope>ACETYLATION AT LYS-131</scope>
    <scope>MUTAGENESIS OF LYS-131</scope>
</reference>
<reference key="4">
    <citation type="journal article" date="2003" name="Mech. Dev.">
        <title>The OAR/aristaless domain of the homeodomain protein Cart1 has an attenuating role in vivo.</title>
        <authorList>
            <person name="Brouwer A."/>
            <person name="ten Berge D."/>
            <person name="Wiegerinck R."/>
            <person name="Meijlink F."/>
        </authorList>
    </citation>
    <scope>DOMAIN</scope>
</reference>
<organism>
    <name type="scientific">Rattus norvegicus</name>
    <name type="common">Rat</name>
    <dbReference type="NCBI Taxonomy" id="10116"/>
    <lineage>
        <taxon>Eukaryota</taxon>
        <taxon>Metazoa</taxon>
        <taxon>Chordata</taxon>
        <taxon>Craniata</taxon>
        <taxon>Vertebrata</taxon>
        <taxon>Euteleostomi</taxon>
        <taxon>Mammalia</taxon>
        <taxon>Eutheria</taxon>
        <taxon>Euarchontoglires</taxon>
        <taxon>Glires</taxon>
        <taxon>Rodentia</taxon>
        <taxon>Myomorpha</taxon>
        <taxon>Muroidea</taxon>
        <taxon>Muridae</taxon>
        <taxon>Murinae</taxon>
        <taxon>Rattus</taxon>
    </lineage>
</organism>
<sequence>MEFLSEKFALKSPPSKNSDFYMGTGGALEHVMETLDNESFYGKATAGKCVQAFGPLPRAEHHVRLDRTSPCQDSSVNYGITKVEGQPLHTELNRAMDGCNNLRMSPVKGMPEKSELDELGDKCDSNVSSSKKRRHRTTFTSLQLEELEKVFQKTHYPDVYVREQLALRTELTEARVQVWFQNRRAKWRKRERYGQIQQAKSHFAATYDISVLPRTDSYPQIQNNLWAGNTSGGSVVTSCMLPRDASSCMTPYSHSPRTDSSYTGFSNHQNQFGHVPLNNFFTDSLLTGTTNGHAFETKPEFERRSSSIAVLRMKAKEHTANISWAM</sequence>
<accession>Q63087</accession>
<evidence type="ECO:0000250" key="1">
    <source>
        <dbReference type="UniProtKB" id="Q15699"/>
    </source>
</evidence>
<evidence type="ECO:0000250" key="2">
    <source>
        <dbReference type="UniProtKB" id="Q8C8B0"/>
    </source>
</evidence>
<evidence type="ECO:0000255" key="3">
    <source>
        <dbReference type="PROSITE-ProRule" id="PRU00108"/>
    </source>
</evidence>
<evidence type="ECO:0000255" key="4">
    <source>
        <dbReference type="PROSITE-ProRule" id="PRU00138"/>
    </source>
</evidence>
<evidence type="ECO:0000269" key="5">
    <source>
    </source>
</evidence>
<evidence type="ECO:0000269" key="6">
    <source>
    </source>
</evidence>
<evidence type="ECO:0000269" key="7">
    <source>
    </source>
</evidence>
<evidence type="ECO:0000269" key="8">
    <source>
    </source>
</evidence>
<evidence type="ECO:0000303" key="9">
    <source>
    </source>
</evidence>
<evidence type="ECO:0000303" key="10">
    <source>
    </source>
</evidence>
<evidence type="ECO:0000305" key="11"/>
<evidence type="ECO:0000312" key="12">
    <source>
        <dbReference type="RGD" id="2273"/>
    </source>
</evidence>
<gene>
    <name evidence="12" type="primary">Alx1</name>
    <name evidence="2" type="synonym">Cart1</name>
</gene>
<dbReference type="EMBL" id="L14018">
    <property type="protein sequence ID" value="AAA40877.1"/>
    <property type="molecule type" value="mRNA"/>
</dbReference>
<dbReference type="PIR" id="A47523">
    <property type="entry name" value="A47523"/>
</dbReference>
<dbReference type="RefSeq" id="NP_037053.1">
    <molecule id="Q63087-1"/>
    <property type="nucleotide sequence ID" value="NM_012921.1"/>
</dbReference>
<dbReference type="RefSeq" id="XP_006241355.1">
    <property type="nucleotide sequence ID" value="XM_006241293.2"/>
</dbReference>
<dbReference type="SMR" id="Q63087"/>
<dbReference type="FunCoup" id="Q63087">
    <property type="interactions" value="50"/>
</dbReference>
<dbReference type="STRING" id="10116.ENSRNOP00000006007"/>
<dbReference type="iPTMnet" id="Q63087"/>
<dbReference type="PhosphoSitePlus" id="Q63087"/>
<dbReference type="PaxDb" id="10116-ENSRNOP00000006007"/>
<dbReference type="Ensembl" id="ENSRNOT00000006007.4">
    <molecule id="Q63087-1"/>
    <property type="protein sequence ID" value="ENSRNOP00000006007.3"/>
    <property type="gene ID" value="ENSRNOG00000004390.4"/>
</dbReference>
<dbReference type="Ensembl" id="ENSRNOT00000107157.1">
    <molecule id="Q63087-3"/>
    <property type="protein sequence ID" value="ENSRNOP00000080707.1"/>
    <property type="gene ID" value="ENSRNOG00000004390.4"/>
</dbReference>
<dbReference type="GeneID" id="25401"/>
<dbReference type="KEGG" id="rno:25401"/>
<dbReference type="UCSC" id="RGD:2273">
    <molecule id="Q63087-1"/>
    <property type="organism name" value="rat"/>
</dbReference>
<dbReference type="AGR" id="RGD:2273"/>
<dbReference type="CTD" id="8092"/>
<dbReference type="RGD" id="2273">
    <property type="gene designation" value="Alx1"/>
</dbReference>
<dbReference type="eggNOG" id="KOG0490">
    <property type="taxonomic scope" value="Eukaryota"/>
</dbReference>
<dbReference type="GeneTree" id="ENSGT00940000158251"/>
<dbReference type="HOGENOM" id="CLU_047013_0_1_1"/>
<dbReference type="InParanoid" id="Q63087"/>
<dbReference type="OMA" id="SSPCGDQ"/>
<dbReference type="OrthoDB" id="10508at9989"/>
<dbReference type="PhylomeDB" id="Q63087"/>
<dbReference type="TreeFam" id="TF350743"/>
<dbReference type="PRO" id="PR:Q63087"/>
<dbReference type="Proteomes" id="UP000002494">
    <property type="component" value="Chromosome 7"/>
</dbReference>
<dbReference type="Bgee" id="ENSRNOG00000004390">
    <property type="expression patterns" value="Expressed in kidney and 2 other cell types or tissues"/>
</dbReference>
<dbReference type="ExpressionAtlas" id="Q63087">
    <property type="expression patterns" value="baseline and differential"/>
</dbReference>
<dbReference type="GO" id="GO:0005634">
    <property type="term" value="C:nucleus"/>
    <property type="evidence" value="ECO:0000314"/>
    <property type="project" value="UniProtKB"/>
</dbReference>
<dbReference type="GO" id="GO:0005667">
    <property type="term" value="C:transcription regulator complex"/>
    <property type="evidence" value="ECO:0000266"/>
    <property type="project" value="RGD"/>
</dbReference>
<dbReference type="GO" id="GO:0001228">
    <property type="term" value="F:DNA-binding transcription activator activity, RNA polymerase II-specific"/>
    <property type="evidence" value="ECO:0000266"/>
    <property type="project" value="RGD"/>
</dbReference>
<dbReference type="GO" id="GO:0003700">
    <property type="term" value="F:DNA-binding transcription factor activity"/>
    <property type="evidence" value="ECO:0000314"/>
    <property type="project" value="UniProtKB"/>
</dbReference>
<dbReference type="GO" id="GO:0042803">
    <property type="term" value="F:protein homodimerization activity"/>
    <property type="evidence" value="ECO:0000314"/>
    <property type="project" value="UniProtKB"/>
</dbReference>
<dbReference type="GO" id="GO:0000977">
    <property type="term" value="F:RNA polymerase II transcription regulatory region sequence-specific DNA binding"/>
    <property type="evidence" value="ECO:0000266"/>
    <property type="project" value="RGD"/>
</dbReference>
<dbReference type="GO" id="GO:0043565">
    <property type="term" value="F:sequence-specific DNA binding"/>
    <property type="evidence" value="ECO:0000266"/>
    <property type="project" value="RGD"/>
</dbReference>
<dbReference type="GO" id="GO:1990837">
    <property type="term" value="F:sequence-specific double-stranded DNA binding"/>
    <property type="evidence" value="ECO:0000266"/>
    <property type="project" value="RGD"/>
</dbReference>
<dbReference type="GO" id="GO:0009952">
    <property type="term" value="P:anterior/posterior pattern specification"/>
    <property type="evidence" value="ECO:0000266"/>
    <property type="project" value="RGD"/>
</dbReference>
<dbReference type="GO" id="GO:0030326">
    <property type="term" value="P:embryonic limb morphogenesis"/>
    <property type="evidence" value="ECO:0000266"/>
    <property type="project" value="RGD"/>
</dbReference>
<dbReference type="GO" id="GO:0048704">
    <property type="term" value="P:embryonic skeletal system morphogenesis"/>
    <property type="evidence" value="ECO:0000266"/>
    <property type="project" value="RGD"/>
</dbReference>
<dbReference type="GO" id="GO:0014031">
    <property type="term" value="P:mesenchymal cell development"/>
    <property type="evidence" value="ECO:0000266"/>
    <property type="project" value="RGD"/>
</dbReference>
<dbReference type="GO" id="GO:0045892">
    <property type="term" value="P:negative regulation of DNA-templated transcription"/>
    <property type="evidence" value="ECO:0000315"/>
    <property type="project" value="UniProtKB"/>
</dbReference>
<dbReference type="GO" id="GO:0000122">
    <property type="term" value="P:negative regulation of transcription by RNA polymerase II"/>
    <property type="evidence" value="ECO:0000266"/>
    <property type="project" value="RGD"/>
</dbReference>
<dbReference type="GO" id="GO:0001843">
    <property type="term" value="P:neural tube closure"/>
    <property type="evidence" value="ECO:0000266"/>
    <property type="project" value="RGD"/>
</dbReference>
<dbReference type="GO" id="GO:0045893">
    <property type="term" value="P:positive regulation of DNA-templated transcription"/>
    <property type="evidence" value="ECO:0000314"/>
    <property type="project" value="UniProtKB"/>
</dbReference>
<dbReference type="GO" id="GO:0010718">
    <property type="term" value="P:positive regulation of epithelial to mesenchymal transition"/>
    <property type="evidence" value="ECO:0000250"/>
    <property type="project" value="UniProtKB"/>
</dbReference>
<dbReference type="GO" id="GO:0045944">
    <property type="term" value="P:positive regulation of transcription by RNA polymerase II"/>
    <property type="evidence" value="ECO:0000266"/>
    <property type="project" value="RGD"/>
</dbReference>
<dbReference type="GO" id="GO:0060021">
    <property type="term" value="P:roof of mouth development"/>
    <property type="evidence" value="ECO:0000266"/>
    <property type="project" value="RGD"/>
</dbReference>
<dbReference type="GO" id="GO:0001501">
    <property type="term" value="P:skeletal system development"/>
    <property type="evidence" value="ECO:0000304"/>
    <property type="project" value="RGD"/>
</dbReference>
<dbReference type="GO" id="GO:0048864">
    <property type="term" value="P:stem cell development"/>
    <property type="evidence" value="ECO:0000266"/>
    <property type="project" value="RGD"/>
</dbReference>
<dbReference type="CDD" id="cd00086">
    <property type="entry name" value="homeodomain"/>
    <property type="match status" value="1"/>
</dbReference>
<dbReference type="FunFam" id="1.10.10.60:FF:000093">
    <property type="entry name" value="ALX homeobox protein 1"/>
    <property type="match status" value="1"/>
</dbReference>
<dbReference type="Gene3D" id="1.10.10.60">
    <property type="entry name" value="Homeodomain-like"/>
    <property type="match status" value="1"/>
</dbReference>
<dbReference type="InterPro" id="IPR001356">
    <property type="entry name" value="HD"/>
</dbReference>
<dbReference type="InterPro" id="IPR017970">
    <property type="entry name" value="Homeobox_CS"/>
</dbReference>
<dbReference type="InterPro" id="IPR009057">
    <property type="entry name" value="Homeodomain-like_sf"/>
</dbReference>
<dbReference type="InterPro" id="IPR003654">
    <property type="entry name" value="OAR_dom"/>
</dbReference>
<dbReference type="InterPro" id="IPR050649">
    <property type="entry name" value="Paired_Homeobox_TFs"/>
</dbReference>
<dbReference type="PANTHER" id="PTHR24329:SF359">
    <property type="entry name" value="ALX HOMEOBOX PROTEIN 1"/>
    <property type="match status" value="1"/>
</dbReference>
<dbReference type="PANTHER" id="PTHR24329">
    <property type="entry name" value="HOMEOBOX PROTEIN ARISTALESS"/>
    <property type="match status" value="1"/>
</dbReference>
<dbReference type="Pfam" id="PF00046">
    <property type="entry name" value="Homeodomain"/>
    <property type="match status" value="1"/>
</dbReference>
<dbReference type="Pfam" id="PF03826">
    <property type="entry name" value="OAR"/>
    <property type="match status" value="1"/>
</dbReference>
<dbReference type="SMART" id="SM00389">
    <property type="entry name" value="HOX"/>
    <property type="match status" value="1"/>
</dbReference>
<dbReference type="SUPFAM" id="SSF46689">
    <property type="entry name" value="Homeodomain-like"/>
    <property type="match status" value="1"/>
</dbReference>
<dbReference type="PROSITE" id="PS00027">
    <property type="entry name" value="HOMEOBOX_1"/>
    <property type="match status" value="1"/>
</dbReference>
<dbReference type="PROSITE" id="PS50071">
    <property type="entry name" value="HOMEOBOX_2"/>
    <property type="match status" value="1"/>
</dbReference>
<dbReference type="PROSITE" id="PS50803">
    <property type="entry name" value="OAR"/>
    <property type="match status" value="1"/>
</dbReference>